<sequence>MNSQIKNKAVYWGTGRRKTSVARVRLIPGNGLIKINGRSGDDYLNFNPLHLNSIKAPLQTLGLENSYDILVNVFGGGLTGQADAIKQGAARALCELSPDNRKPLKTEGHLSRDPRAKERRKYGLKKARKAPQFSKR</sequence>
<gene>
    <name evidence="1" type="primary">rpsI</name>
    <name evidence="1" type="synonym">rps9</name>
    <name type="ordered locus">A9601_17391</name>
</gene>
<proteinExistence type="inferred from homology"/>
<accession>A2BTB1</accession>
<organism>
    <name type="scientific">Prochlorococcus marinus (strain AS9601)</name>
    <dbReference type="NCBI Taxonomy" id="146891"/>
    <lineage>
        <taxon>Bacteria</taxon>
        <taxon>Bacillati</taxon>
        <taxon>Cyanobacteriota</taxon>
        <taxon>Cyanophyceae</taxon>
        <taxon>Synechococcales</taxon>
        <taxon>Prochlorococcaceae</taxon>
        <taxon>Prochlorococcus</taxon>
    </lineage>
</organism>
<feature type="chain" id="PRO_1000051288" description="Small ribosomal subunit protein uS9">
    <location>
        <begin position="1"/>
        <end position="136"/>
    </location>
</feature>
<feature type="region of interest" description="Disordered" evidence="2">
    <location>
        <begin position="97"/>
        <end position="136"/>
    </location>
</feature>
<feature type="compositionally biased region" description="Basic and acidic residues" evidence="2">
    <location>
        <begin position="98"/>
        <end position="116"/>
    </location>
</feature>
<feature type="compositionally biased region" description="Basic residues" evidence="2">
    <location>
        <begin position="117"/>
        <end position="136"/>
    </location>
</feature>
<reference key="1">
    <citation type="journal article" date="2007" name="PLoS Genet.">
        <title>Patterns and implications of gene gain and loss in the evolution of Prochlorococcus.</title>
        <authorList>
            <person name="Kettler G.C."/>
            <person name="Martiny A.C."/>
            <person name="Huang K."/>
            <person name="Zucker J."/>
            <person name="Coleman M.L."/>
            <person name="Rodrigue S."/>
            <person name="Chen F."/>
            <person name="Lapidus A."/>
            <person name="Ferriera S."/>
            <person name="Johnson J."/>
            <person name="Steglich C."/>
            <person name="Church G.M."/>
            <person name="Richardson P."/>
            <person name="Chisholm S.W."/>
        </authorList>
    </citation>
    <scope>NUCLEOTIDE SEQUENCE [LARGE SCALE GENOMIC DNA]</scope>
    <source>
        <strain>AS9601</strain>
    </source>
</reference>
<dbReference type="EMBL" id="CP000551">
    <property type="protein sequence ID" value="ABM71022.1"/>
    <property type="molecule type" value="Genomic_DNA"/>
</dbReference>
<dbReference type="RefSeq" id="WP_011819147.1">
    <property type="nucleotide sequence ID" value="NC_008816.1"/>
</dbReference>
<dbReference type="SMR" id="A2BTB1"/>
<dbReference type="STRING" id="146891.A9601_17391"/>
<dbReference type="KEGG" id="pmb:A9601_17391"/>
<dbReference type="eggNOG" id="COG0103">
    <property type="taxonomic scope" value="Bacteria"/>
</dbReference>
<dbReference type="HOGENOM" id="CLU_046483_2_1_3"/>
<dbReference type="OrthoDB" id="9803965at2"/>
<dbReference type="Proteomes" id="UP000002590">
    <property type="component" value="Chromosome"/>
</dbReference>
<dbReference type="GO" id="GO:0022627">
    <property type="term" value="C:cytosolic small ribosomal subunit"/>
    <property type="evidence" value="ECO:0007669"/>
    <property type="project" value="TreeGrafter"/>
</dbReference>
<dbReference type="GO" id="GO:0003723">
    <property type="term" value="F:RNA binding"/>
    <property type="evidence" value="ECO:0007669"/>
    <property type="project" value="TreeGrafter"/>
</dbReference>
<dbReference type="GO" id="GO:0003735">
    <property type="term" value="F:structural constituent of ribosome"/>
    <property type="evidence" value="ECO:0007669"/>
    <property type="project" value="InterPro"/>
</dbReference>
<dbReference type="GO" id="GO:0006412">
    <property type="term" value="P:translation"/>
    <property type="evidence" value="ECO:0007669"/>
    <property type="project" value="UniProtKB-UniRule"/>
</dbReference>
<dbReference type="FunFam" id="3.30.230.10:FF:000001">
    <property type="entry name" value="30S ribosomal protein S9"/>
    <property type="match status" value="1"/>
</dbReference>
<dbReference type="Gene3D" id="3.30.230.10">
    <property type="match status" value="1"/>
</dbReference>
<dbReference type="HAMAP" id="MF_00532_B">
    <property type="entry name" value="Ribosomal_uS9_B"/>
    <property type="match status" value="1"/>
</dbReference>
<dbReference type="InterPro" id="IPR020568">
    <property type="entry name" value="Ribosomal_Su5_D2-typ_SF"/>
</dbReference>
<dbReference type="InterPro" id="IPR000754">
    <property type="entry name" value="Ribosomal_uS9"/>
</dbReference>
<dbReference type="InterPro" id="IPR023035">
    <property type="entry name" value="Ribosomal_uS9_bac/plastid"/>
</dbReference>
<dbReference type="InterPro" id="IPR020574">
    <property type="entry name" value="Ribosomal_uS9_CS"/>
</dbReference>
<dbReference type="InterPro" id="IPR014721">
    <property type="entry name" value="Ribsml_uS5_D2-typ_fold_subgr"/>
</dbReference>
<dbReference type="NCBIfam" id="NF001099">
    <property type="entry name" value="PRK00132.1"/>
    <property type="match status" value="1"/>
</dbReference>
<dbReference type="PANTHER" id="PTHR21569">
    <property type="entry name" value="RIBOSOMAL PROTEIN S9"/>
    <property type="match status" value="1"/>
</dbReference>
<dbReference type="PANTHER" id="PTHR21569:SF1">
    <property type="entry name" value="SMALL RIBOSOMAL SUBUNIT PROTEIN US9M"/>
    <property type="match status" value="1"/>
</dbReference>
<dbReference type="Pfam" id="PF00380">
    <property type="entry name" value="Ribosomal_S9"/>
    <property type="match status" value="1"/>
</dbReference>
<dbReference type="SUPFAM" id="SSF54211">
    <property type="entry name" value="Ribosomal protein S5 domain 2-like"/>
    <property type="match status" value="1"/>
</dbReference>
<dbReference type="PROSITE" id="PS00360">
    <property type="entry name" value="RIBOSOMAL_S9"/>
    <property type="match status" value="1"/>
</dbReference>
<name>RS9_PROMS</name>
<protein>
    <recommendedName>
        <fullName evidence="1">Small ribosomal subunit protein uS9</fullName>
    </recommendedName>
    <alternativeName>
        <fullName evidence="3">30S ribosomal protein S9</fullName>
    </alternativeName>
</protein>
<comment type="similarity">
    <text evidence="1">Belongs to the universal ribosomal protein uS9 family.</text>
</comment>
<evidence type="ECO:0000255" key="1">
    <source>
        <dbReference type="HAMAP-Rule" id="MF_00532"/>
    </source>
</evidence>
<evidence type="ECO:0000256" key="2">
    <source>
        <dbReference type="SAM" id="MobiDB-lite"/>
    </source>
</evidence>
<evidence type="ECO:0000305" key="3"/>
<keyword id="KW-0687">Ribonucleoprotein</keyword>
<keyword id="KW-0689">Ribosomal protein</keyword>